<protein>
    <recommendedName>
        <fullName evidence="1">DNA repair protein RecO</fullName>
    </recommendedName>
    <alternativeName>
        <fullName evidence="1">Recombination protein O</fullName>
    </alternativeName>
</protein>
<feature type="chain" id="PRO_1000077730" description="DNA repair protein RecO">
    <location>
        <begin position="1"/>
        <end position="242"/>
    </location>
</feature>
<dbReference type="EMBL" id="CP000946">
    <property type="protein sequence ID" value="ACA76779.1"/>
    <property type="molecule type" value="Genomic_DNA"/>
</dbReference>
<dbReference type="RefSeq" id="WP_000399404.1">
    <property type="nucleotide sequence ID" value="NZ_MTFT01000002.1"/>
</dbReference>
<dbReference type="SMR" id="B1IVR2"/>
<dbReference type="KEGG" id="ecl:EcolC_1112"/>
<dbReference type="HOGENOM" id="CLU_066645_1_0_6"/>
<dbReference type="GO" id="GO:0043590">
    <property type="term" value="C:bacterial nucleoid"/>
    <property type="evidence" value="ECO:0007669"/>
    <property type="project" value="TreeGrafter"/>
</dbReference>
<dbReference type="GO" id="GO:0006310">
    <property type="term" value="P:DNA recombination"/>
    <property type="evidence" value="ECO:0007669"/>
    <property type="project" value="UniProtKB-UniRule"/>
</dbReference>
<dbReference type="GO" id="GO:0006302">
    <property type="term" value="P:double-strand break repair"/>
    <property type="evidence" value="ECO:0007669"/>
    <property type="project" value="TreeGrafter"/>
</dbReference>
<dbReference type="FunFam" id="1.20.1440.120:FF:000001">
    <property type="entry name" value="DNA repair protein RecO"/>
    <property type="match status" value="1"/>
</dbReference>
<dbReference type="FunFam" id="2.40.50.140:FF:000074">
    <property type="entry name" value="DNA repair protein RecO"/>
    <property type="match status" value="1"/>
</dbReference>
<dbReference type="Gene3D" id="2.40.50.140">
    <property type="entry name" value="Nucleic acid-binding proteins"/>
    <property type="match status" value="1"/>
</dbReference>
<dbReference type="Gene3D" id="1.20.1440.120">
    <property type="entry name" value="Recombination protein O, C-terminal domain"/>
    <property type="match status" value="1"/>
</dbReference>
<dbReference type="HAMAP" id="MF_00201">
    <property type="entry name" value="RecO"/>
    <property type="match status" value="1"/>
</dbReference>
<dbReference type="InterPro" id="IPR037278">
    <property type="entry name" value="ARFGAP/RecO"/>
</dbReference>
<dbReference type="InterPro" id="IPR022572">
    <property type="entry name" value="DNA_rep/recomb_RecO_N"/>
</dbReference>
<dbReference type="InterPro" id="IPR012340">
    <property type="entry name" value="NA-bd_OB-fold"/>
</dbReference>
<dbReference type="InterPro" id="IPR003717">
    <property type="entry name" value="RecO"/>
</dbReference>
<dbReference type="InterPro" id="IPR042242">
    <property type="entry name" value="RecO_C"/>
</dbReference>
<dbReference type="NCBIfam" id="TIGR00613">
    <property type="entry name" value="reco"/>
    <property type="match status" value="1"/>
</dbReference>
<dbReference type="PANTHER" id="PTHR33991">
    <property type="entry name" value="DNA REPAIR PROTEIN RECO"/>
    <property type="match status" value="1"/>
</dbReference>
<dbReference type="PANTHER" id="PTHR33991:SF1">
    <property type="entry name" value="DNA REPAIR PROTEIN RECO"/>
    <property type="match status" value="1"/>
</dbReference>
<dbReference type="Pfam" id="PF02565">
    <property type="entry name" value="RecO_C"/>
    <property type="match status" value="1"/>
</dbReference>
<dbReference type="Pfam" id="PF11967">
    <property type="entry name" value="RecO_N"/>
    <property type="match status" value="1"/>
</dbReference>
<dbReference type="SUPFAM" id="SSF57863">
    <property type="entry name" value="ArfGap/RecO-like zinc finger"/>
    <property type="match status" value="1"/>
</dbReference>
<dbReference type="SUPFAM" id="SSF50249">
    <property type="entry name" value="Nucleic acid-binding proteins"/>
    <property type="match status" value="1"/>
</dbReference>
<name>RECO_ECOLC</name>
<accession>B1IVR2</accession>
<organism>
    <name type="scientific">Escherichia coli (strain ATCC 8739 / DSM 1576 / NBRC 3972 / NCIMB 8545 / WDCM 00012 / Crooks)</name>
    <dbReference type="NCBI Taxonomy" id="481805"/>
    <lineage>
        <taxon>Bacteria</taxon>
        <taxon>Pseudomonadati</taxon>
        <taxon>Pseudomonadota</taxon>
        <taxon>Gammaproteobacteria</taxon>
        <taxon>Enterobacterales</taxon>
        <taxon>Enterobacteriaceae</taxon>
        <taxon>Escherichia</taxon>
    </lineage>
</organism>
<sequence length="242" mass="27391">MEGWQRAFVLHSRPWSETSLMLDVFTEESGRVRLVAKGARSKRSTLKGALQPFTPLLLRFGGRGEVKTLRSAEAVSLALPLSGITLYSGLYINELLSRVLEYETRFSELFFDYLHCIQSLAGVTGTPEPALRRFELALLGHLGYGVNFTHCAGSGEPVDDTMTYRYREEKGFIASVVIDNKTFTGRQLKALNAREFPDADTLRAAKRFTRMALKPYLGGKPLKSRELFRQFMPKRTVKTHYE</sequence>
<comment type="function">
    <text evidence="1">Involved in DNA repair and RecF pathway recombination.</text>
</comment>
<comment type="subunit">
    <text evidence="1">Monomer.</text>
</comment>
<comment type="similarity">
    <text evidence="1">Belongs to the RecO family.</text>
</comment>
<reference key="1">
    <citation type="submission" date="2008-02" db="EMBL/GenBank/DDBJ databases">
        <title>Complete sequence of Escherichia coli C str. ATCC 8739.</title>
        <authorList>
            <person name="Copeland A."/>
            <person name="Lucas S."/>
            <person name="Lapidus A."/>
            <person name="Glavina del Rio T."/>
            <person name="Dalin E."/>
            <person name="Tice H."/>
            <person name="Bruce D."/>
            <person name="Goodwin L."/>
            <person name="Pitluck S."/>
            <person name="Kiss H."/>
            <person name="Brettin T."/>
            <person name="Detter J.C."/>
            <person name="Han C."/>
            <person name="Kuske C.R."/>
            <person name="Schmutz J."/>
            <person name="Larimer F."/>
            <person name="Land M."/>
            <person name="Hauser L."/>
            <person name="Kyrpides N."/>
            <person name="Mikhailova N."/>
            <person name="Ingram L."/>
            <person name="Richardson P."/>
        </authorList>
    </citation>
    <scope>NUCLEOTIDE SEQUENCE [LARGE SCALE GENOMIC DNA]</scope>
    <source>
        <strain>ATCC 8739 / DSM 1576 / NBRC 3972 / NCIMB 8545 / WDCM 00012 / Crooks</strain>
    </source>
</reference>
<proteinExistence type="inferred from homology"/>
<evidence type="ECO:0000255" key="1">
    <source>
        <dbReference type="HAMAP-Rule" id="MF_00201"/>
    </source>
</evidence>
<gene>
    <name evidence="1" type="primary">recO</name>
    <name type="ordered locus">EcolC_1112</name>
</gene>
<keyword id="KW-0227">DNA damage</keyword>
<keyword id="KW-0233">DNA recombination</keyword>
<keyword id="KW-0234">DNA repair</keyword>